<evidence type="ECO:0000255" key="1">
    <source>
        <dbReference type="HAMAP-Rule" id="MF_00394"/>
    </source>
</evidence>
<protein>
    <recommendedName>
        <fullName evidence="1">Glycerol-3-phosphate dehydrogenase [NAD(P)+]</fullName>
        <ecNumber evidence="1">1.1.1.94</ecNumber>
    </recommendedName>
    <alternativeName>
        <fullName evidence="1">NAD(P)(+)-dependent glycerol-3-phosphate dehydrogenase</fullName>
    </alternativeName>
    <alternativeName>
        <fullName evidence="1">NAD(P)H-dependent dihydroxyacetone-phosphate reductase</fullName>
    </alternativeName>
</protein>
<feature type="chain" id="PRO_0000137977" description="Glycerol-3-phosphate dehydrogenase [NAD(P)+]">
    <location>
        <begin position="1"/>
        <end position="338"/>
    </location>
</feature>
<feature type="active site" description="Proton acceptor" evidence="1">
    <location>
        <position position="196"/>
    </location>
</feature>
<feature type="binding site" evidence="1">
    <location>
        <position position="12"/>
    </location>
    <ligand>
        <name>NADPH</name>
        <dbReference type="ChEBI" id="CHEBI:57783"/>
    </ligand>
</feature>
<feature type="binding site" evidence="1">
    <location>
        <position position="13"/>
    </location>
    <ligand>
        <name>NADPH</name>
        <dbReference type="ChEBI" id="CHEBI:57783"/>
    </ligand>
</feature>
<feature type="binding site" evidence="1">
    <location>
        <position position="110"/>
    </location>
    <ligand>
        <name>NADPH</name>
        <dbReference type="ChEBI" id="CHEBI:57783"/>
    </ligand>
</feature>
<feature type="binding site" evidence="1">
    <location>
        <position position="110"/>
    </location>
    <ligand>
        <name>sn-glycerol 3-phosphate</name>
        <dbReference type="ChEBI" id="CHEBI:57597"/>
    </ligand>
</feature>
<feature type="binding site" evidence="1">
    <location>
        <position position="141"/>
    </location>
    <ligand>
        <name>sn-glycerol 3-phosphate</name>
        <dbReference type="ChEBI" id="CHEBI:57597"/>
    </ligand>
</feature>
<feature type="binding site" evidence="1">
    <location>
        <position position="143"/>
    </location>
    <ligand>
        <name>sn-glycerol 3-phosphate</name>
        <dbReference type="ChEBI" id="CHEBI:57597"/>
    </ligand>
</feature>
<feature type="binding site" evidence="1">
    <location>
        <position position="145"/>
    </location>
    <ligand>
        <name>NADPH</name>
        <dbReference type="ChEBI" id="CHEBI:57783"/>
    </ligand>
</feature>
<feature type="binding site" evidence="1">
    <location>
        <position position="196"/>
    </location>
    <ligand>
        <name>sn-glycerol 3-phosphate</name>
        <dbReference type="ChEBI" id="CHEBI:57597"/>
    </ligand>
</feature>
<feature type="binding site" evidence="1">
    <location>
        <position position="249"/>
    </location>
    <ligand>
        <name>sn-glycerol 3-phosphate</name>
        <dbReference type="ChEBI" id="CHEBI:57597"/>
    </ligand>
</feature>
<feature type="binding site" evidence="1">
    <location>
        <position position="259"/>
    </location>
    <ligand>
        <name>sn-glycerol 3-phosphate</name>
        <dbReference type="ChEBI" id="CHEBI:57597"/>
    </ligand>
</feature>
<feature type="binding site" evidence="1">
    <location>
        <position position="260"/>
    </location>
    <ligand>
        <name>NADPH</name>
        <dbReference type="ChEBI" id="CHEBI:57783"/>
    </ligand>
</feature>
<feature type="binding site" evidence="1">
    <location>
        <position position="260"/>
    </location>
    <ligand>
        <name>sn-glycerol 3-phosphate</name>
        <dbReference type="ChEBI" id="CHEBI:57597"/>
    </ligand>
</feature>
<feature type="binding site" evidence="1">
    <location>
        <position position="261"/>
    </location>
    <ligand>
        <name>sn-glycerol 3-phosphate</name>
        <dbReference type="ChEBI" id="CHEBI:57597"/>
    </ligand>
</feature>
<feature type="binding site" evidence="1">
    <location>
        <position position="284"/>
    </location>
    <ligand>
        <name>NADPH</name>
        <dbReference type="ChEBI" id="CHEBI:57783"/>
    </ligand>
</feature>
<feature type="binding site" evidence="1">
    <location>
        <position position="286"/>
    </location>
    <ligand>
        <name>NADPH</name>
        <dbReference type="ChEBI" id="CHEBI:57783"/>
    </ligand>
</feature>
<name>GPDA_LACPL</name>
<proteinExistence type="inferred from homology"/>
<keyword id="KW-0963">Cytoplasm</keyword>
<keyword id="KW-0444">Lipid biosynthesis</keyword>
<keyword id="KW-0443">Lipid metabolism</keyword>
<keyword id="KW-0520">NAD</keyword>
<keyword id="KW-0521">NADP</keyword>
<keyword id="KW-0547">Nucleotide-binding</keyword>
<keyword id="KW-0560">Oxidoreductase</keyword>
<keyword id="KW-0594">Phospholipid biosynthesis</keyword>
<keyword id="KW-1208">Phospholipid metabolism</keyword>
<keyword id="KW-1185">Reference proteome</keyword>
<gene>
    <name evidence="1" type="primary">gpsA</name>
    <name type="ordered locus">lp_0756</name>
</gene>
<organism>
    <name type="scientific">Lactiplantibacillus plantarum (strain ATCC BAA-793 / NCIMB 8826 / WCFS1)</name>
    <name type="common">Lactobacillus plantarum</name>
    <dbReference type="NCBI Taxonomy" id="220668"/>
    <lineage>
        <taxon>Bacteria</taxon>
        <taxon>Bacillati</taxon>
        <taxon>Bacillota</taxon>
        <taxon>Bacilli</taxon>
        <taxon>Lactobacillales</taxon>
        <taxon>Lactobacillaceae</taxon>
        <taxon>Lactiplantibacillus</taxon>
    </lineage>
</organism>
<comment type="function">
    <text evidence="1">Catalyzes the reduction of the glycolytic intermediate dihydroxyacetone phosphate (DHAP) to sn-glycerol 3-phosphate (G3P), the key precursor for phospholipid synthesis.</text>
</comment>
<comment type="catalytic activity">
    <reaction evidence="1">
        <text>sn-glycerol 3-phosphate + NAD(+) = dihydroxyacetone phosphate + NADH + H(+)</text>
        <dbReference type="Rhea" id="RHEA:11092"/>
        <dbReference type="ChEBI" id="CHEBI:15378"/>
        <dbReference type="ChEBI" id="CHEBI:57540"/>
        <dbReference type="ChEBI" id="CHEBI:57597"/>
        <dbReference type="ChEBI" id="CHEBI:57642"/>
        <dbReference type="ChEBI" id="CHEBI:57945"/>
        <dbReference type="EC" id="1.1.1.94"/>
    </reaction>
    <physiologicalReaction direction="right-to-left" evidence="1">
        <dbReference type="Rhea" id="RHEA:11094"/>
    </physiologicalReaction>
</comment>
<comment type="catalytic activity">
    <reaction evidence="1">
        <text>sn-glycerol 3-phosphate + NADP(+) = dihydroxyacetone phosphate + NADPH + H(+)</text>
        <dbReference type="Rhea" id="RHEA:11096"/>
        <dbReference type="ChEBI" id="CHEBI:15378"/>
        <dbReference type="ChEBI" id="CHEBI:57597"/>
        <dbReference type="ChEBI" id="CHEBI:57642"/>
        <dbReference type="ChEBI" id="CHEBI:57783"/>
        <dbReference type="ChEBI" id="CHEBI:58349"/>
        <dbReference type="EC" id="1.1.1.94"/>
    </reaction>
    <physiologicalReaction direction="right-to-left" evidence="1">
        <dbReference type="Rhea" id="RHEA:11098"/>
    </physiologicalReaction>
</comment>
<comment type="pathway">
    <text evidence="1">Membrane lipid metabolism; glycerophospholipid metabolism.</text>
</comment>
<comment type="subcellular location">
    <subcellularLocation>
        <location evidence="1">Cytoplasm</location>
    </subcellularLocation>
</comment>
<comment type="similarity">
    <text evidence="1">Belongs to the NAD-dependent glycerol-3-phosphate dehydrogenase family.</text>
</comment>
<reference key="1">
    <citation type="journal article" date="2003" name="Proc. Natl. Acad. Sci. U.S.A.">
        <title>Complete genome sequence of Lactobacillus plantarum WCFS1.</title>
        <authorList>
            <person name="Kleerebezem M."/>
            <person name="Boekhorst J."/>
            <person name="van Kranenburg R."/>
            <person name="Molenaar D."/>
            <person name="Kuipers O.P."/>
            <person name="Leer R."/>
            <person name="Tarchini R."/>
            <person name="Peters S.A."/>
            <person name="Sandbrink H.M."/>
            <person name="Fiers M.W.E.J."/>
            <person name="Stiekema W."/>
            <person name="Klein Lankhorst R.M."/>
            <person name="Bron P.A."/>
            <person name="Hoffer S.M."/>
            <person name="Nierop Groot M.N."/>
            <person name="Kerkhoven R."/>
            <person name="De Vries M."/>
            <person name="Ursing B."/>
            <person name="De Vos W.M."/>
            <person name="Siezen R.J."/>
        </authorList>
    </citation>
    <scope>NUCLEOTIDE SEQUENCE [LARGE SCALE GENOMIC DNA]</scope>
    <source>
        <strain>ATCC BAA-793 / NCIMB 8826 / WCFS1</strain>
    </source>
</reference>
<reference key="2">
    <citation type="journal article" date="2012" name="J. Bacteriol.">
        <title>Complete resequencing and reannotation of the Lactobacillus plantarum WCFS1 genome.</title>
        <authorList>
            <person name="Siezen R.J."/>
            <person name="Francke C."/>
            <person name="Renckens B."/>
            <person name="Boekhorst J."/>
            <person name="Wels M."/>
            <person name="Kleerebezem M."/>
            <person name="van Hijum S.A."/>
        </authorList>
    </citation>
    <scope>NUCLEOTIDE SEQUENCE [LARGE SCALE GENOMIC DNA]</scope>
    <scope>GENOME REANNOTATION</scope>
    <source>
        <strain>ATCC BAA-793 / NCIMB 8826 / WCFS1</strain>
    </source>
</reference>
<dbReference type="EC" id="1.1.1.94" evidence="1"/>
<dbReference type="EMBL" id="AL935263">
    <property type="protein sequence ID" value="CCC78222.1"/>
    <property type="molecule type" value="Genomic_DNA"/>
</dbReference>
<dbReference type="RefSeq" id="WP_003646081.1">
    <property type="nucleotide sequence ID" value="NC_004567.2"/>
</dbReference>
<dbReference type="RefSeq" id="YP_004888736.1">
    <property type="nucleotide sequence ID" value="NC_004567.2"/>
</dbReference>
<dbReference type="SMR" id="Q88YK1"/>
<dbReference type="STRING" id="220668.lp_0756"/>
<dbReference type="EnsemblBacteria" id="CCC78222">
    <property type="protein sequence ID" value="CCC78222"/>
    <property type="gene ID" value="lp_0756"/>
</dbReference>
<dbReference type="KEGG" id="lpl:lp_0756"/>
<dbReference type="PATRIC" id="fig|220668.9.peg.637"/>
<dbReference type="eggNOG" id="COG0240">
    <property type="taxonomic scope" value="Bacteria"/>
</dbReference>
<dbReference type="HOGENOM" id="CLU_033449_0_2_9"/>
<dbReference type="OrthoDB" id="9812273at2"/>
<dbReference type="PhylomeDB" id="Q88YK1"/>
<dbReference type="UniPathway" id="UPA00940"/>
<dbReference type="Proteomes" id="UP000000432">
    <property type="component" value="Chromosome"/>
</dbReference>
<dbReference type="GO" id="GO:0005829">
    <property type="term" value="C:cytosol"/>
    <property type="evidence" value="ECO:0007669"/>
    <property type="project" value="TreeGrafter"/>
</dbReference>
<dbReference type="GO" id="GO:0047952">
    <property type="term" value="F:glycerol-3-phosphate dehydrogenase [NAD(P)+] activity"/>
    <property type="evidence" value="ECO:0007669"/>
    <property type="project" value="UniProtKB-UniRule"/>
</dbReference>
<dbReference type="GO" id="GO:0051287">
    <property type="term" value="F:NAD binding"/>
    <property type="evidence" value="ECO:0007669"/>
    <property type="project" value="InterPro"/>
</dbReference>
<dbReference type="GO" id="GO:0005975">
    <property type="term" value="P:carbohydrate metabolic process"/>
    <property type="evidence" value="ECO:0007669"/>
    <property type="project" value="InterPro"/>
</dbReference>
<dbReference type="GO" id="GO:0046167">
    <property type="term" value="P:glycerol-3-phosphate biosynthetic process"/>
    <property type="evidence" value="ECO:0007669"/>
    <property type="project" value="UniProtKB-UniRule"/>
</dbReference>
<dbReference type="GO" id="GO:0046168">
    <property type="term" value="P:glycerol-3-phosphate catabolic process"/>
    <property type="evidence" value="ECO:0007669"/>
    <property type="project" value="InterPro"/>
</dbReference>
<dbReference type="GO" id="GO:0006650">
    <property type="term" value="P:glycerophospholipid metabolic process"/>
    <property type="evidence" value="ECO:0007669"/>
    <property type="project" value="UniProtKB-UniRule"/>
</dbReference>
<dbReference type="GO" id="GO:0008654">
    <property type="term" value="P:phospholipid biosynthetic process"/>
    <property type="evidence" value="ECO:0007669"/>
    <property type="project" value="UniProtKB-KW"/>
</dbReference>
<dbReference type="FunFam" id="1.10.1040.10:FF:000001">
    <property type="entry name" value="Glycerol-3-phosphate dehydrogenase [NAD(P)+]"/>
    <property type="match status" value="1"/>
</dbReference>
<dbReference type="FunFam" id="3.40.50.720:FF:000019">
    <property type="entry name" value="Glycerol-3-phosphate dehydrogenase [NAD(P)+]"/>
    <property type="match status" value="1"/>
</dbReference>
<dbReference type="Gene3D" id="1.10.1040.10">
    <property type="entry name" value="N-(1-d-carboxylethyl)-l-norvaline Dehydrogenase, domain 2"/>
    <property type="match status" value="1"/>
</dbReference>
<dbReference type="Gene3D" id="3.40.50.720">
    <property type="entry name" value="NAD(P)-binding Rossmann-like Domain"/>
    <property type="match status" value="1"/>
</dbReference>
<dbReference type="HAMAP" id="MF_00394">
    <property type="entry name" value="NAD_Glyc3P_dehydrog"/>
    <property type="match status" value="1"/>
</dbReference>
<dbReference type="InterPro" id="IPR008927">
    <property type="entry name" value="6-PGluconate_DH-like_C_sf"/>
</dbReference>
<dbReference type="InterPro" id="IPR013328">
    <property type="entry name" value="6PGD_dom2"/>
</dbReference>
<dbReference type="InterPro" id="IPR006168">
    <property type="entry name" value="G3P_DH_NAD-dep"/>
</dbReference>
<dbReference type="InterPro" id="IPR006109">
    <property type="entry name" value="G3P_DH_NAD-dep_C"/>
</dbReference>
<dbReference type="InterPro" id="IPR011128">
    <property type="entry name" value="G3P_DH_NAD-dep_N"/>
</dbReference>
<dbReference type="InterPro" id="IPR036291">
    <property type="entry name" value="NAD(P)-bd_dom_sf"/>
</dbReference>
<dbReference type="NCBIfam" id="NF000940">
    <property type="entry name" value="PRK00094.1-2"/>
    <property type="match status" value="1"/>
</dbReference>
<dbReference type="NCBIfam" id="NF000941">
    <property type="entry name" value="PRK00094.1-3"/>
    <property type="match status" value="1"/>
</dbReference>
<dbReference type="NCBIfam" id="NF000942">
    <property type="entry name" value="PRK00094.1-4"/>
    <property type="match status" value="1"/>
</dbReference>
<dbReference type="PANTHER" id="PTHR11728">
    <property type="entry name" value="GLYCEROL-3-PHOSPHATE DEHYDROGENASE"/>
    <property type="match status" value="1"/>
</dbReference>
<dbReference type="PANTHER" id="PTHR11728:SF1">
    <property type="entry name" value="GLYCEROL-3-PHOSPHATE DEHYDROGENASE [NAD(+)] 2, CHLOROPLASTIC"/>
    <property type="match status" value="1"/>
</dbReference>
<dbReference type="Pfam" id="PF07479">
    <property type="entry name" value="NAD_Gly3P_dh_C"/>
    <property type="match status" value="1"/>
</dbReference>
<dbReference type="Pfam" id="PF01210">
    <property type="entry name" value="NAD_Gly3P_dh_N"/>
    <property type="match status" value="1"/>
</dbReference>
<dbReference type="PIRSF" id="PIRSF000114">
    <property type="entry name" value="Glycerol-3-P_dh"/>
    <property type="match status" value="1"/>
</dbReference>
<dbReference type="PRINTS" id="PR00077">
    <property type="entry name" value="GPDHDRGNASE"/>
</dbReference>
<dbReference type="SUPFAM" id="SSF48179">
    <property type="entry name" value="6-phosphogluconate dehydrogenase C-terminal domain-like"/>
    <property type="match status" value="1"/>
</dbReference>
<dbReference type="SUPFAM" id="SSF51735">
    <property type="entry name" value="NAD(P)-binding Rossmann-fold domains"/>
    <property type="match status" value="1"/>
</dbReference>
<dbReference type="PROSITE" id="PS00957">
    <property type="entry name" value="NAD_G3PDH"/>
    <property type="match status" value="1"/>
</dbReference>
<sequence>MMKKIAVLGAGSWGSILANLLDENGHSVRLWSYSPAQVTELNEKHTNERYVPDFKYSETLTAYSNLTQAIDGADVILFVVPTKAIREVAQQVTAVLAKTHQRPIIVHASKGLEQETHKRLSQVLAEEIPTELRQAIVVLSGPSHAEEVARHDITLITAASADESAAELVQQLFMNDYFRIYTNTDVVGVELGAALKNIIALGAGALHGLGYGDDAKAALMTRGLAEISRLGVALGAEPLTFIGLSGVGDLIVTATSVHSRNWRAGNELGAGQDLKTVIDTMGMVIEGIPSTKAAYELAQQQNIEMPITEAIYDVLYKSADIKEVIPQLMRREGKPEIQ</sequence>
<accession>Q88YK1</accession>
<accession>F9ULY3</accession>